<sequence>MKRPDYRTLQALDAVIRERGFERAAQKLCITQSAVSQRIKQLENMFGQPLLVRTVPPRPTEQGQKLLALLRQVELLEEEWLGDEQTGSTPLLLSLAVNADSLATWLLPALAPVLADSPIRLNLQVEDETRTQERLRRGEVVGAVSIQHQALPSCLVDKLGALDYLFVSSKPFAEKYFPNGVTRSALLKAPVVAFDHLDDMHQAFLQQNFDLPPGSVPCHIVNSSEAFVQLARQGTTCCMIPHLQIEKELASGELIDLTPGLFQRRMLYWHRFAPESRMMRKVTDALLDYGHKVLRQD</sequence>
<keyword id="KW-0238">DNA-binding</keyword>
<keyword id="KW-0804">Transcription</keyword>
<keyword id="KW-0805">Transcription regulation</keyword>
<name>ARGP_ECO5E</name>
<reference key="1">
    <citation type="journal article" date="2011" name="Proc. Natl. Acad. Sci. U.S.A.">
        <title>Genomic anatomy of Escherichia coli O157:H7 outbreaks.</title>
        <authorList>
            <person name="Eppinger M."/>
            <person name="Mammel M.K."/>
            <person name="Leclerc J.E."/>
            <person name="Ravel J."/>
            <person name="Cebula T.A."/>
        </authorList>
    </citation>
    <scope>NUCLEOTIDE SEQUENCE [LARGE SCALE GENOMIC DNA]</scope>
    <source>
        <strain>EC4115 / EHEC</strain>
    </source>
</reference>
<gene>
    <name evidence="1" type="primary">argP</name>
    <name type="synonym">iciA</name>
    <name type="ordered locus">ECH74115_4212</name>
</gene>
<dbReference type="EMBL" id="CP001164">
    <property type="protein sequence ID" value="ACI38216.1"/>
    <property type="molecule type" value="Genomic_DNA"/>
</dbReference>
<dbReference type="RefSeq" id="WP_000828351.1">
    <property type="nucleotide sequence ID" value="NC_011353.1"/>
</dbReference>
<dbReference type="SMR" id="B5YQA9"/>
<dbReference type="GeneID" id="93779084"/>
<dbReference type="KEGG" id="ecf:ECH74115_4212"/>
<dbReference type="HOGENOM" id="CLU_063829_0_0_6"/>
<dbReference type="GO" id="GO:0003677">
    <property type="term" value="F:DNA binding"/>
    <property type="evidence" value="ECO:0007669"/>
    <property type="project" value="UniProtKB-UniRule"/>
</dbReference>
<dbReference type="GO" id="GO:0003700">
    <property type="term" value="F:DNA-binding transcription factor activity"/>
    <property type="evidence" value="ECO:0007669"/>
    <property type="project" value="UniProtKB-UniRule"/>
</dbReference>
<dbReference type="CDD" id="cd08428">
    <property type="entry name" value="PBP2_IciA_ArgP"/>
    <property type="match status" value="1"/>
</dbReference>
<dbReference type="FunFam" id="1.10.10.10:FF:000061">
    <property type="entry name" value="HTH-type transcriptional regulator ArgP"/>
    <property type="match status" value="1"/>
</dbReference>
<dbReference type="FunFam" id="3.40.190.290:FF:000002">
    <property type="entry name" value="HTH-type transcriptional regulator ArgP"/>
    <property type="match status" value="1"/>
</dbReference>
<dbReference type="Gene3D" id="3.40.190.290">
    <property type="match status" value="1"/>
</dbReference>
<dbReference type="Gene3D" id="1.10.10.10">
    <property type="entry name" value="Winged helix-like DNA-binding domain superfamily/Winged helix DNA-binding domain"/>
    <property type="match status" value="1"/>
</dbReference>
<dbReference type="HAMAP" id="MF_00513">
    <property type="entry name" value="HTH_type_ArgP"/>
    <property type="match status" value="1"/>
</dbReference>
<dbReference type="InterPro" id="IPR017685">
    <property type="entry name" value="ArgP"/>
</dbReference>
<dbReference type="InterPro" id="IPR023490">
    <property type="entry name" value="ArgP_gammaproteobact"/>
</dbReference>
<dbReference type="InterPro" id="IPR050176">
    <property type="entry name" value="LTTR"/>
</dbReference>
<dbReference type="InterPro" id="IPR005119">
    <property type="entry name" value="LysR_subst-bd"/>
</dbReference>
<dbReference type="InterPro" id="IPR000847">
    <property type="entry name" value="Tscrpt_reg_HTH_LysR"/>
</dbReference>
<dbReference type="InterPro" id="IPR036388">
    <property type="entry name" value="WH-like_DNA-bd_sf"/>
</dbReference>
<dbReference type="InterPro" id="IPR036390">
    <property type="entry name" value="WH_DNA-bd_sf"/>
</dbReference>
<dbReference type="NCBIfam" id="TIGR03298">
    <property type="entry name" value="argP"/>
    <property type="match status" value="1"/>
</dbReference>
<dbReference type="NCBIfam" id="NF002964">
    <property type="entry name" value="PRK03635.1"/>
    <property type="match status" value="1"/>
</dbReference>
<dbReference type="NCBIfam" id="NF009888">
    <property type="entry name" value="PRK13348.1"/>
    <property type="match status" value="1"/>
</dbReference>
<dbReference type="PANTHER" id="PTHR30579:SF2">
    <property type="entry name" value="HTH-TYPE TRANSCRIPTIONAL REGULATOR ARGP"/>
    <property type="match status" value="1"/>
</dbReference>
<dbReference type="PANTHER" id="PTHR30579">
    <property type="entry name" value="TRANSCRIPTIONAL REGULATOR"/>
    <property type="match status" value="1"/>
</dbReference>
<dbReference type="Pfam" id="PF00126">
    <property type="entry name" value="HTH_1"/>
    <property type="match status" value="1"/>
</dbReference>
<dbReference type="Pfam" id="PF03466">
    <property type="entry name" value="LysR_substrate"/>
    <property type="match status" value="1"/>
</dbReference>
<dbReference type="PRINTS" id="PR00039">
    <property type="entry name" value="HTHLYSR"/>
</dbReference>
<dbReference type="SUPFAM" id="SSF53850">
    <property type="entry name" value="Periplasmic binding protein-like II"/>
    <property type="match status" value="1"/>
</dbReference>
<dbReference type="SUPFAM" id="SSF46785">
    <property type="entry name" value="Winged helix' DNA-binding domain"/>
    <property type="match status" value="1"/>
</dbReference>
<dbReference type="PROSITE" id="PS50931">
    <property type="entry name" value="HTH_LYSR"/>
    <property type="match status" value="1"/>
</dbReference>
<proteinExistence type="inferred from homology"/>
<evidence type="ECO:0000255" key="1">
    <source>
        <dbReference type="HAMAP-Rule" id="MF_00513"/>
    </source>
</evidence>
<evidence type="ECO:0000305" key="2"/>
<feature type="chain" id="PRO_1000127267" description="HTH-type transcriptional regulator ArgP">
    <location>
        <begin position="1"/>
        <end position="297"/>
    </location>
</feature>
<feature type="domain" description="HTH lysR-type" evidence="1">
    <location>
        <begin position="4"/>
        <end position="60"/>
    </location>
</feature>
<feature type="DNA-binding region" description="H-T-H motif" evidence="1">
    <location>
        <begin position="21"/>
        <end position="40"/>
    </location>
</feature>
<protein>
    <recommendedName>
        <fullName evidence="1">HTH-type transcriptional regulator ArgP</fullName>
    </recommendedName>
</protein>
<comment type="function">
    <text evidence="1">Controls the transcription of genes involved in arginine and lysine metabolism.</text>
</comment>
<comment type="subunit">
    <text evidence="1">Homodimer.</text>
</comment>
<comment type="similarity">
    <text evidence="2">Belongs to the LysR transcriptional regulatory family.</text>
</comment>
<organism>
    <name type="scientific">Escherichia coli O157:H7 (strain EC4115 / EHEC)</name>
    <dbReference type="NCBI Taxonomy" id="444450"/>
    <lineage>
        <taxon>Bacteria</taxon>
        <taxon>Pseudomonadati</taxon>
        <taxon>Pseudomonadota</taxon>
        <taxon>Gammaproteobacteria</taxon>
        <taxon>Enterobacterales</taxon>
        <taxon>Enterobacteriaceae</taxon>
        <taxon>Escherichia</taxon>
    </lineage>
</organism>
<accession>B5YQA9</accession>